<keyword id="KW-0002">3D-structure</keyword>
<keyword id="KW-0106">Calcium</keyword>
<keyword id="KW-1015">Disulfide bond</keyword>
<keyword id="KW-0378">Hydrolase</keyword>
<keyword id="KW-0442">Lipid degradation</keyword>
<keyword id="KW-0443">Lipid metabolism</keyword>
<keyword id="KW-0479">Metal-binding</keyword>
<keyword id="KW-1185">Reference proteome</keyword>
<keyword id="KW-0964">Secreted</keyword>
<keyword id="KW-0732">Signal</keyword>
<proteinExistence type="evidence at protein level"/>
<reference key="1">
    <citation type="journal article" date="1999" name="Plant Mol. Biol.">
        <title>Plant low-molecular-weight phospholipase A2S (PLA2s) are structurally related to the animal secretory PLA2s and are present as a family of isoforms in rice (Oryza sativa).</title>
        <authorList>
            <person name="Staahl U."/>
            <person name="Lee M."/>
            <person name="Sjoedahl S."/>
            <person name="Archer D."/>
            <person name="Cellini F."/>
            <person name="Ek B."/>
            <person name="Iannacone R."/>
            <person name="MacKenzie D."/>
            <person name="Semeraro L."/>
            <person name="Tramontano E."/>
            <person name="Stymme S."/>
        </authorList>
    </citation>
    <scope>NUCLEOTIDE SEQUENCE [MRNA]</scope>
    <source>
        <strain>cv. Nipponbare</strain>
        <tissue>Shoot</tissue>
    </source>
</reference>
<reference key="2">
    <citation type="journal article" date="2005" name="Nature">
        <title>The map-based sequence of the rice genome.</title>
        <authorList>
            <consortium name="International rice genome sequencing project (IRGSP)"/>
        </authorList>
    </citation>
    <scope>NUCLEOTIDE SEQUENCE [LARGE SCALE GENOMIC DNA]</scope>
    <source>
        <strain>cv. Nipponbare</strain>
    </source>
</reference>
<reference key="3">
    <citation type="journal article" date="2008" name="Nucleic Acids Res.">
        <title>The rice annotation project database (RAP-DB): 2008 update.</title>
        <authorList>
            <consortium name="The rice annotation project (RAP)"/>
        </authorList>
    </citation>
    <scope>GENOME REANNOTATION</scope>
    <source>
        <strain>cv. Nipponbare</strain>
    </source>
</reference>
<reference key="4">
    <citation type="journal article" date="2013" name="Rice">
        <title>Improvement of the Oryza sativa Nipponbare reference genome using next generation sequence and optical map data.</title>
        <authorList>
            <person name="Kawahara Y."/>
            <person name="de la Bastide M."/>
            <person name="Hamilton J.P."/>
            <person name="Kanamori H."/>
            <person name="McCombie W.R."/>
            <person name="Ouyang S."/>
            <person name="Schwartz D.C."/>
            <person name="Tanaka T."/>
            <person name="Wu J."/>
            <person name="Zhou S."/>
            <person name="Childs K.L."/>
            <person name="Davidson R.M."/>
            <person name="Lin H."/>
            <person name="Quesada-Ocampo L."/>
            <person name="Vaillancourt B."/>
            <person name="Sakai H."/>
            <person name="Lee S.S."/>
            <person name="Kim J."/>
            <person name="Numa H."/>
            <person name="Itoh T."/>
            <person name="Buell C.R."/>
            <person name="Matsumoto T."/>
        </authorList>
    </citation>
    <scope>GENOME REANNOTATION</scope>
    <source>
        <strain>cv. Nipponbare</strain>
    </source>
</reference>
<reference key="5">
    <citation type="journal article" date="2005" name="PLoS Biol.">
        <title>The genomes of Oryza sativa: a history of duplications.</title>
        <authorList>
            <person name="Yu J."/>
            <person name="Wang J."/>
            <person name="Lin W."/>
            <person name="Li S."/>
            <person name="Li H."/>
            <person name="Zhou J."/>
            <person name="Ni P."/>
            <person name="Dong W."/>
            <person name="Hu S."/>
            <person name="Zeng C."/>
            <person name="Zhang J."/>
            <person name="Zhang Y."/>
            <person name="Li R."/>
            <person name="Xu Z."/>
            <person name="Li S."/>
            <person name="Li X."/>
            <person name="Zheng H."/>
            <person name="Cong L."/>
            <person name="Lin L."/>
            <person name="Yin J."/>
            <person name="Geng J."/>
            <person name="Li G."/>
            <person name="Shi J."/>
            <person name="Liu J."/>
            <person name="Lv H."/>
            <person name="Li J."/>
            <person name="Wang J."/>
            <person name="Deng Y."/>
            <person name="Ran L."/>
            <person name="Shi X."/>
            <person name="Wang X."/>
            <person name="Wu Q."/>
            <person name="Li C."/>
            <person name="Ren X."/>
            <person name="Wang J."/>
            <person name="Wang X."/>
            <person name="Li D."/>
            <person name="Liu D."/>
            <person name="Zhang X."/>
            <person name="Ji Z."/>
            <person name="Zhao W."/>
            <person name="Sun Y."/>
            <person name="Zhang Z."/>
            <person name="Bao J."/>
            <person name="Han Y."/>
            <person name="Dong L."/>
            <person name="Ji J."/>
            <person name="Chen P."/>
            <person name="Wu S."/>
            <person name="Liu J."/>
            <person name="Xiao Y."/>
            <person name="Bu D."/>
            <person name="Tan J."/>
            <person name="Yang L."/>
            <person name="Ye C."/>
            <person name="Zhang J."/>
            <person name="Xu J."/>
            <person name="Zhou Y."/>
            <person name="Yu Y."/>
            <person name="Zhang B."/>
            <person name="Zhuang S."/>
            <person name="Wei H."/>
            <person name="Liu B."/>
            <person name="Lei M."/>
            <person name="Yu H."/>
            <person name="Li Y."/>
            <person name="Xu H."/>
            <person name="Wei S."/>
            <person name="He X."/>
            <person name="Fang L."/>
            <person name="Zhang Z."/>
            <person name="Zhang Y."/>
            <person name="Huang X."/>
            <person name="Su Z."/>
            <person name="Tong W."/>
            <person name="Li J."/>
            <person name="Tong Z."/>
            <person name="Li S."/>
            <person name="Ye J."/>
            <person name="Wang L."/>
            <person name="Fang L."/>
            <person name="Lei T."/>
            <person name="Chen C.-S."/>
            <person name="Chen H.-C."/>
            <person name="Xu Z."/>
            <person name="Li H."/>
            <person name="Huang H."/>
            <person name="Zhang F."/>
            <person name="Xu H."/>
            <person name="Li N."/>
            <person name="Zhao C."/>
            <person name="Li S."/>
            <person name="Dong L."/>
            <person name="Huang Y."/>
            <person name="Li L."/>
            <person name="Xi Y."/>
            <person name="Qi Q."/>
            <person name="Li W."/>
            <person name="Zhang B."/>
            <person name="Hu W."/>
            <person name="Zhang Y."/>
            <person name="Tian X."/>
            <person name="Jiao Y."/>
            <person name="Liang X."/>
            <person name="Jin J."/>
            <person name="Gao L."/>
            <person name="Zheng W."/>
            <person name="Hao B."/>
            <person name="Liu S.-M."/>
            <person name="Wang W."/>
            <person name="Yuan L."/>
            <person name="Cao M."/>
            <person name="McDermott J."/>
            <person name="Samudrala R."/>
            <person name="Wang J."/>
            <person name="Wong G.K.-S."/>
            <person name="Yang H."/>
        </authorList>
    </citation>
    <scope>NUCLEOTIDE SEQUENCE [LARGE SCALE GENOMIC DNA]</scope>
    <source>
        <strain>cv. Nipponbare</strain>
    </source>
</reference>
<reference key="6">
    <citation type="journal article" date="2009" name="J. Biol. Chem.">
        <title>Crystal structure of a class XIB phospholipase A2 (PLA2): rice (oryza sativa) isoform-2 pla2 and an octanoate complex.</title>
        <authorList>
            <person name="Guy J.E."/>
            <person name="Staahl U."/>
            <person name="Lindqvist Y."/>
        </authorList>
    </citation>
    <scope>X-RAY CRYSTALLOGRAPHY (2.0 ANGSTROMS) OF 25-153 IN COMPLEX WITH CALCIUM IONS AND SUBSTRATE ANALOG</scope>
    <scope>DISULFIDE BONDS</scope>
</reference>
<accession>Q9XG81</accession>
<accession>A0A0P0VVN9</accession>
<accession>Q0DTA4</accession>
<dbReference type="EC" id="3.1.1.4"/>
<dbReference type="EMBL" id="AJ238117">
    <property type="protein sequence ID" value="CAB40842.1"/>
    <property type="molecule type" value="mRNA"/>
</dbReference>
<dbReference type="EMBL" id="AP008209">
    <property type="protein sequence ID" value="BAF11534.1"/>
    <property type="molecule type" value="Genomic_DNA"/>
</dbReference>
<dbReference type="EMBL" id="AP014959">
    <property type="protein sequence ID" value="BAS83356.1"/>
    <property type="molecule type" value="Genomic_DNA"/>
</dbReference>
<dbReference type="EMBL" id="CM000140">
    <property type="protein sequence ID" value="EEE58732.1"/>
    <property type="molecule type" value="Genomic_DNA"/>
</dbReference>
<dbReference type="RefSeq" id="XP_015629036.1">
    <property type="nucleotide sequence ID" value="XM_015773550.1"/>
</dbReference>
<dbReference type="PDB" id="2WG7">
    <property type="method" value="X-ray"/>
    <property type="resolution" value="2.00 A"/>
    <property type="chains" value="A/B=25-153"/>
</dbReference>
<dbReference type="PDB" id="2WG8">
    <property type="method" value="X-ray"/>
    <property type="resolution" value="2.30 A"/>
    <property type="chains" value="A/B/C=26-153"/>
</dbReference>
<dbReference type="PDB" id="2WG9">
    <property type="method" value="X-ray"/>
    <property type="resolution" value="2.00 A"/>
    <property type="chains" value="A/B=25-153"/>
</dbReference>
<dbReference type="PDBsum" id="2WG7"/>
<dbReference type="PDBsum" id="2WG8"/>
<dbReference type="PDBsum" id="2WG9"/>
<dbReference type="SMR" id="Q9XG81"/>
<dbReference type="STRING" id="39947.Q9XG81"/>
<dbReference type="PaxDb" id="39947-Q9XG81"/>
<dbReference type="EnsemblPlants" id="Os03t0261100-01">
    <property type="protein sequence ID" value="Os03t0261100-01"/>
    <property type="gene ID" value="Os03g0261100"/>
</dbReference>
<dbReference type="Gramene" id="Os03t0261100-01">
    <property type="protein sequence ID" value="Os03t0261100-01"/>
    <property type="gene ID" value="Os03g0261100"/>
</dbReference>
<dbReference type="KEGG" id="dosa:Os03g0261100"/>
<dbReference type="eggNOG" id="ENOG502RYYJ">
    <property type="taxonomic scope" value="Eukaryota"/>
</dbReference>
<dbReference type="HOGENOM" id="CLU_115623_0_0_1"/>
<dbReference type="InParanoid" id="Q9XG81"/>
<dbReference type="OMA" id="CVDTHNN"/>
<dbReference type="BRENDA" id="3.1.1.4">
    <property type="organism ID" value="4460"/>
</dbReference>
<dbReference type="EvolutionaryTrace" id="Q9XG81"/>
<dbReference type="Proteomes" id="UP000000763">
    <property type="component" value="Chromosome 3"/>
</dbReference>
<dbReference type="Proteomes" id="UP000007752">
    <property type="component" value="Chromosome 3"/>
</dbReference>
<dbReference type="Proteomes" id="UP000059680">
    <property type="component" value="Chromosome 3"/>
</dbReference>
<dbReference type="GO" id="GO:0005576">
    <property type="term" value="C:extracellular region"/>
    <property type="evidence" value="ECO:0007669"/>
    <property type="project" value="UniProtKB-SubCell"/>
</dbReference>
<dbReference type="GO" id="GO:0005509">
    <property type="term" value="F:calcium ion binding"/>
    <property type="evidence" value="ECO:0000314"/>
    <property type="project" value="UniProtKB"/>
</dbReference>
<dbReference type="GO" id="GO:0008289">
    <property type="term" value="F:lipid binding"/>
    <property type="evidence" value="ECO:0000314"/>
    <property type="project" value="UniProtKB"/>
</dbReference>
<dbReference type="GO" id="GO:0004623">
    <property type="term" value="F:phospholipase A2 activity"/>
    <property type="evidence" value="ECO:0000318"/>
    <property type="project" value="GO_Central"/>
</dbReference>
<dbReference type="GO" id="GO:0050482">
    <property type="term" value="P:arachidonate secretion"/>
    <property type="evidence" value="ECO:0007669"/>
    <property type="project" value="InterPro"/>
</dbReference>
<dbReference type="GO" id="GO:0016042">
    <property type="term" value="P:lipid catabolic process"/>
    <property type="evidence" value="ECO:0007669"/>
    <property type="project" value="UniProtKB-KW"/>
</dbReference>
<dbReference type="GO" id="GO:0006644">
    <property type="term" value="P:phospholipid metabolic process"/>
    <property type="evidence" value="ECO:0007669"/>
    <property type="project" value="InterPro"/>
</dbReference>
<dbReference type="CDD" id="cd04706">
    <property type="entry name" value="PLA2_plant"/>
    <property type="match status" value="1"/>
</dbReference>
<dbReference type="FunFam" id="1.20.90.10:FF:000005">
    <property type="entry name" value="Secretory phospholipase A2"/>
    <property type="match status" value="1"/>
</dbReference>
<dbReference type="Gene3D" id="1.20.90.10">
    <property type="entry name" value="Phospholipase A2 domain"/>
    <property type="match status" value="1"/>
</dbReference>
<dbReference type="InterPro" id="IPR036444">
    <property type="entry name" value="PLipase_A2_dom_sf"/>
</dbReference>
<dbReference type="InterPro" id="IPR033113">
    <property type="entry name" value="PLipase_A2_His_AS"/>
</dbReference>
<dbReference type="SUPFAM" id="SSF48619">
    <property type="entry name" value="Phospholipase A2, PLA2"/>
    <property type="match status" value="1"/>
</dbReference>
<dbReference type="PROSITE" id="PS00118">
    <property type="entry name" value="PA2_HIS"/>
    <property type="match status" value="1"/>
</dbReference>
<evidence type="ECO:0000250" key="1"/>
<evidence type="ECO:0000255" key="2"/>
<evidence type="ECO:0000255" key="3">
    <source>
        <dbReference type="PROSITE-ProRule" id="PRU10035"/>
    </source>
</evidence>
<evidence type="ECO:0000269" key="4">
    <source>
    </source>
</evidence>
<evidence type="ECO:0000305" key="5"/>
<evidence type="ECO:0007829" key="6">
    <source>
        <dbReference type="PDB" id="2WG7"/>
    </source>
</evidence>
<evidence type="ECO:0007829" key="7">
    <source>
        <dbReference type="PDB" id="2WG9"/>
    </source>
</evidence>
<gene>
    <name type="primary">PLA2-II</name>
    <name type="ordered locus">Os03g0261100</name>
    <name type="ordered locus">LOC_Os03g15460</name>
    <name type="ORF">OsJ_10213</name>
</gene>
<organism>
    <name type="scientific">Oryza sativa subsp. japonica</name>
    <name type="common">Rice</name>
    <dbReference type="NCBI Taxonomy" id="39947"/>
    <lineage>
        <taxon>Eukaryota</taxon>
        <taxon>Viridiplantae</taxon>
        <taxon>Streptophyta</taxon>
        <taxon>Embryophyta</taxon>
        <taxon>Tracheophyta</taxon>
        <taxon>Spermatophyta</taxon>
        <taxon>Magnoliopsida</taxon>
        <taxon>Liliopsida</taxon>
        <taxon>Poales</taxon>
        <taxon>Poaceae</taxon>
        <taxon>BOP clade</taxon>
        <taxon>Oryzoideae</taxon>
        <taxon>Oryzeae</taxon>
        <taxon>Oryzinae</taxon>
        <taxon>Oryza</taxon>
        <taxon>Oryza sativa</taxon>
    </lineage>
</organism>
<protein>
    <recommendedName>
        <fullName>Probable phospholipase A2 homolog 2</fullName>
        <ecNumber>3.1.1.4</ecNumber>
    </recommendedName>
</protein>
<name>PLA22_ORYSJ</name>
<comment type="function">
    <text evidence="1">PA2 catalyzes the calcium-dependent hydrolysis of the 2-acyl groups in 3-sn-phosphoglycerides. Releases lysophospholipids (LPLs) and free fatty acids (FFAs) from membrane phospholipids in response to hormones and other external stimuli.</text>
</comment>
<comment type="catalytic activity">
    <reaction evidence="3">
        <text>a 1,2-diacyl-sn-glycero-3-phosphocholine + H2O = a 1-acyl-sn-glycero-3-phosphocholine + a fatty acid + H(+)</text>
        <dbReference type="Rhea" id="RHEA:15801"/>
        <dbReference type="ChEBI" id="CHEBI:15377"/>
        <dbReference type="ChEBI" id="CHEBI:15378"/>
        <dbReference type="ChEBI" id="CHEBI:28868"/>
        <dbReference type="ChEBI" id="CHEBI:57643"/>
        <dbReference type="ChEBI" id="CHEBI:58168"/>
        <dbReference type="EC" id="3.1.1.4"/>
    </reaction>
</comment>
<comment type="cofactor">
    <cofactor>
        <name>Ca(2+)</name>
        <dbReference type="ChEBI" id="CHEBI:29108"/>
    </cofactor>
    <text>Binds 1 Ca(2+) ion per subunit.</text>
</comment>
<comment type="subcellular location">
    <subcellularLocation>
        <location evidence="5">Secreted</location>
    </subcellularLocation>
</comment>
<comment type="similarity">
    <text evidence="5">Belongs to the phospholipase A2 family.</text>
</comment>
<feature type="signal peptide" evidence="2">
    <location>
        <begin position="1"/>
        <end position="25"/>
    </location>
</feature>
<feature type="chain" id="PRO_5000065168" description="Probable phospholipase A2 homolog 2">
    <location>
        <begin position="26"/>
        <end position="153"/>
    </location>
</feature>
<feature type="active site" evidence="3">
    <location>
        <position position="86"/>
    </location>
</feature>
<feature type="binding site">
    <location>
        <position position="62"/>
    </location>
    <ligand>
        <name>Ca(2+)</name>
        <dbReference type="ChEBI" id="CHEBI:29108"/>
    </ligand>
</feature>
<feature type="binding site">
    <location>
        <position position="64"/>
    </location>
    <ligand>
        <name>Ca(2+)</name>
        <dbReference type="ChEBI" id="CHEBI:29108"/>
    </ligand>
</feature>
<feature type="binding site">
    <location>
        <position position="67"/>
    </location>
    <ligand>
        <name>Ca(2+)</name>
        <dbReference type="ChEBI" id="CHEBI:29108"/>
    </ligand>
</feature>
<feature type="binding site">
    <location>
        <position position="87"/>
    </location>
    <ligand>
        <name>Ca(2+)</name>
        <dbReference type="ChEBI" id="CHEBI:29108"/>
    </ligand>
</feature>
<feature type="disulfide bond" evidence="4">
    <location>
        <begin position="42"/>
        <end position="70"/>
    </location>
</feature>
<feature type="disulfide bond" evidence="4">
    <location>
        <begin position="46"/>
        <end position="76"/>
    </location>
</feature>
<feature type="disulfide bond" evidence="4">
    <location>
        <begin position="51"/>
        <end position="123"/>
    </location>
</feature>
<feature type="disulfide bond" evidence="4">
    <location>
        <begin position="63"/>
        <end position="83"/>
    </location>
</feature>
<feature type="disulfide bond" evidence="4">
    <location>
        <begin position="82"/>
        <end position="109"/>
    </location>
</feature>
<feature type="disulfide bond" evidence="4">
    <location>
        <begin position="89"/>
        <end position="102"/>
    </location>
</feature>
<feature type="helix" evidence="6">
    <location>
        <begin position="28"/>
        <end position="30"/>
    </location>
</feature>
<feature type="strand" evidence="7">
    <location>
        <begin position="39"/>
        <end position="41"/>
    </location>
</feature>
<feature type="strand" evidence="6">
    <location>
        <begin position="47"/>
        <end position="50"/>
    </location>
</feature>
<feature type="turn" evidence="6">
    <location>
        <begin position="54"/>
        <end position="56"/>
    </location>
</feature>
<feature type="strand" evidence="6">
    <location>
        <begin position="58"/>
        <end position="60"/>
    </location>
</feature>
<feature type="helix" evidence="6">
    <location>
        <begin position="78"/>
        <end position="91"/>
    </location>
</feature>
<feature type="turn" evidence="6">
    <location>
        <begin position="92"/>
        <end position="95"/>
    </location>
</feature>
<feature type="helix" evidence="6">
    <location>
        <begin position="100"/>
        <end position="110"/>
    </location>
</feature>
<feature type="helix" evidence="6">
    <location>
        <begin position="125"/>
        <end position="149"/>
    </location>
</feature>
<sequence length="153" mass="16578">MRFFLKLAPRCSVLLLLLLVTASRGLNIGDLLGSTPAKDQGCSRTCESQFCTIAPLLRYGKYCGILYSGCPGERPCDALDACCMVHDHCVDTHNDDYLNTMCNENLLSCIDRVSGATFPGNKCNVGQTASVIRGVIETAVFAGKILHKRDDGQ</sequence>